<reference key="1">
    <citation type="journal article" date="2008" name="Antimicrob. Agents Chemother.">
        <title>Mutated response regulator graR is responsible for phenotypic conversion of Staphylococcus aureus from heterogeneous vancomycin-intermediate resistance to vancomycin-intermediate resistance.</title>
        <authorList>
            <person name="Neoh H.-M."/>
            <person name="Cui L."/>
            <person name="Yuzawa H."/>
            <person name="Takeuchi F."/>
            <person name="Matsuo M."/>
            <person name="Hiramatsu K."/>
        </authorList>
    </citation>
    <scope>NUCLEOTIDE SEQUENCE [LARGE SCALE GENOMIC DNA]</scope>
    <source>
        <strain>Mu3 / ATCC 700698</strain>
    </source>
</reference>
<sequence>MARSIKKGPFVDEHLMKKVEAQEGSEKKQVIKTWSRRSTIFPNFIGHTFAVYDGRKHVPVYVTEDMVGHKLGEFAPTRTFKGHVADDKKTRR</sequence>
<proteinExistence type="inferred from homology"/>
<accession>A7X5F7</accession>
<name>RS19_STAA1</name>
<evidence type="ECO:0000255" key="1">
    <source>
        <dbReference type="HAMAP-Rule" id="MF_00531"/>
    </source>
</evidence>
<evidence type="ECO:0000305" key="2"/>
<comment type="function">
    <text evidence="1">Protein S19 forms a complex with S13 that binds strongly to the 16S ribosomal RNA.</text>
</comment>
<comment type="similarity">
    <text evidence="1">Belongs to the universal ribosomal protein uS19 family.</text>
</comment>
<gene>
    <name evidence="1" type="primary">rpsS</name>
    <name type="ordered locus">SAHV_2230</name>
</gene>
<protein>
    <recommendedName>
        <fullName evidence="1">Small ribosomal subunit protein uS19</fullName>
    </recommendedName>
    <alternativeName>
        <fullName evidence="2">30S ribosomal protein S19</fullName>
    </alternativeName>
</protein>
<keyword id="KW-0687">Ribonucleoprotein</keyword>
<keyword id="KW-0689">Ribosomal protein</keyword>
<keyword id="KW-0694">RNA-binding</keyword>
<keyword id="KW-0699">rRNA-binding</keyword>
<feature type="chain" id="PRO_1000051130" description="Small ribosomal subunit protein uS19">
    <location>
        <begin position="1"/>
        <end position="92"/>
    </location>
</feature>
<dbReference type="EMBL" id="AP009324">
    <property type="protein sequence ID" value="BAF79113.1"/>
    <property type="molecule type" value="Genomic_DNA"/>
</dbReference>
<dbReference type="RefSeq" id="WP_000124353.1">
    <property type="nucleotide sequence ID" value="NZ_CTYB01000025.1"/>
</dbReference>
<dbReference type="SMR" id="A7X5F7"/>
<dbReference type="GeneID" id="98346558"/>
<dbReference type="KEGG" id="saw:SAHV_2230"/>
<dbReference type="HOGENOM" id="CLU_144911_0_1_9"/>
<dbReference type="GO" id="GO:0005737">
    <property type="term" value="C:cytoplasm"/>
    <property type="evidence" value="ECO:0007669"/>
    <property type="project" value="UniProtKB-ARBA"/>
</dbReference>
<dbReference type="GO" id="GO:0015935">
    <property type="term" value="C:small ribosomal subunit"/>
    <property type="evidence" value="ECO:0007669"/>
    <property type="project" value="InterPro"/>
</dbReference>
<dbReference type="GO" id="GO:0019843">
    <property type="term" value="F:rRNA binding"/>
    <property type="evidence" value="ECO:0007669"/>
    <property type="project" value="UniProtKB-UniRule"/>
</dbReference>
<dbReference type="GO" id="GO:0003735">
    <property type="term" value="F:structural constituent of ribosome"/>
    <property type="evidence" value="ECO:0007669"/>
    <property type="project" value="InterPro"/>
</dbReference>
<dbReference type="GO" id="GO:0000028">
    <property type="term" value="P:ribosomal small subunit assembly"/>
    <property type="evidence" value="ECO:0007669"/>
    <property type="project" value="TreeGrafter"/>
</dbReference>
<dbReference type="GO" id="GO:0006412">
    <property type="term" value="P:translation"/>
    <property type="evidence" value="ECO:0007669"/>
    <property type="project" value="UniProtKB-UniRule"/>
</dbReference>
<dbReference type="FunFam" id="3.30.860.10:FF:000001">
    <property type="entry name" value="30S ribosomal protein S19"/>
    <property type="match status" value="1"/>
</dbReference>
<dbReference type="Gene3D" id="3.30.860.10">
    <property type="entry name" value="30s Ribosomal Protein S19, Chain A"/>
    <property type="match status" value="1"/>
</dbReference>
<dbReference type="HAMAP" id="MF_00531">
    <property type="entry name" value="Ribosomal_uS19"/>
    <property type="match status" value="1"/>
</dbReference>
<dbReference type="InterPro" id="IPR002222">
    <property type="entry name" value="Ribosomal_uS19"/>
</dbReference>
<dbReference type="InterPro" id="IPR005732">
    <property type="entry name" value="Ribosomal_uS19_bac-type"/>
</dbReference>
<dbReference type="InterPro" id="IPR020934">
    <property type="entry name" value="Ribosomal_uS19_CS"/>
</dbReference>
<dbReference type="InterPro" id="IPR023575">
    <property type="entry name" value="Ribosomal_uS19_SF"/>
</dbReference>
<dbReference type="NCBIfam" id="TIGR01050">
    <property type="entry name" value="rpsS_bact"/>
    <property type="match status" value="1"/>
</dbReference>
<dbReference type="PANTHER" id="PTHR11880">
    <property type="entry name" value="RIBOSOMAL PROTEIN S19P FAMILY MEMBER"/>
    <property type="match status" value="1"/>
</dbReference>
<dbReference type="PANTHER" id="PTHR11880:SF8">
    <property type="entry name" value="SMALL RIBOSOMAL SUBUNIT PROTEIN US19M"/>
    <property type="match status" value="1"/>
</dbReference>
<dbReference type="Pfam" id="PF00203">
    <property type="entry name" value="Ribosomal_S19"/>
    <property type="match status" value="1"/>
</dbReference>
<dbReference type="PIRSF" id="PIRSF002144">
    <property type="entry name" value="Ribosomal_S19"/>
    <property type="match status" value="1"/>
</dbReference>
<dbReference type="PRINTS" id="PR00975">
    <property type="entry name" value="RIBOSOMALS19"/>
</dbReference>
<dbReference type="SUPFAM" id="SSF54570">
    <property type="entry name" value="Ribosomal protein S19"/>
    <property type="match status" value="1"/>
</dbReference>
<dbReference type="PROSITE" id="PS00323">
    <property type="entry name" value="RIBOSOMAL_S19"/>
    <property type="match status" value="1"/>
</dbReference>
<organism>
    <name type="scientific">Staphylococcus aureus (strain Mu3 / ATCC 700698)</name>
    <dbReference type="NCBI Taxonomy" id="418127"/>
    <lineage>
        <taxon>Bacteria</taxon>
        <taxon>Bacillati</taxon>
        <taxon>Bacillota</taxon>
        <taxon>Bacilli</taxon>
        <taxon>Bacillales</taxon>
        <taxon>Staphylococcaceae</taxon>
        <taxon>Staphylococcus</taxon>
    </lineage>
</organism>